<feature type="chain" id="PRO_1000141272" description="Small ribosomal subunit protein uS13">
    <location>
        <begin position="1"/>
        <end position="127"/>
    </location>
</feature>
<feature type="region of interest" description="Disordered" evidence="2">
    <location>
        <begin position="95"/>
        <end position="127"/>
    </location>
</feature>
<name>RS13_HERA2</name>
<proteinExistence type="inferred from homology"/>
<reference key="1">
    <citation type="journal article" date="2011" name="Stand. Genomic Sci.">
        <title>Complete genome sequence of the filamentous gliding predatory bacterium Herpetosiphon aurantiacus type strain (114-95(T)).</title>
        <authorList>
            <person name="Kiss H."/>
            <person name="Nett M."/>
            <person name="Domin N."/>
            <person name="Martin K."/>
            <person name="Maresca J.A."/>
            <person name="Copeland A."/>
            <person name="Lapidus A."/>
            <person name="Lucas S."/>
            <person name="Berry K.W."/>
            <person name="Glavina Del Rio T."/>
            <person name="Dalin E."/>
            <person name="Tice H."/>
            <person name="Pitluck S."/>
            <person name="Richardson P."/>
            <person name="Bruce D."/>
            <person name="Goodwin L."/>
            <person name="Han C."/>
            <person name="Detter J.C."/>
            <person name="Schmutz J."/>
            <person name="Brettin T."/>
            <person name="Land M."/>
            <person name="Hauser L."/>
            <person name="Kyrpides N.C."/>
            <person name="Ivanova N."/>
            <person name="Goeker M."/>
            <person name="Woyke T."/>
            <person name="Klenk H.P."/>
            <person name="Bryant D.A."/>
        </authorList>
    </citation>
    <scope>NUCLEOTIDE SEQUENCE [LARGE SCALE GENOMIC DNA]</scope>
    <source>
        <strain>ATCC 23779 / DSM 785 / 114-95</strain>
    </source>
</reference>
<accession>A9B434</accession>
<keyword id="KW-0687">Ribonucleoprotein</keyword>
<keyword id="KW-0689">Ribosomal protein</keyword>
<keyword id="KW-0694">RNA-binding</keyword>
<keyword id="KW-0699">rRNA-binding</keyword>
<keyword id="KW-0820">tRNA-binding</keyword>
<dbReference type="EMBL" id="CP000875">
    <property type="protein sequence ID" value="ABX07567.1"/>
    <property type="molecule type" value="Genomic_DNA"/>
</dbReference>
<dbReference type="SMR" id="A9B434"/>
<dbReference type="FunCoup" id="A9B434">
    <property type="interactions" value="541"/>
</dbReference>
<dbReference type="STRING" id="316274.Haur_4937"/>
<dbReference type="KEGG" id="hau:Haur_4937"/>
<dbReference type="eggNOG" id="COG0099">
    <property type="taxonomic scope" value="Bacteria"/>
</dbReference>
<dbReference type="HOGENOM" id="CLU_103849_1_2_0"/>
<dbReference type="InParanoid" id="A9B434"/>
<dbReference type="Proteomes" id="UP000000787">
    <property type="component" value="Chromosome"/>
</dbReference>
<dbReference type="GO" id="GO:0005829">
    <property type="term" value="C:cytosol"/>
    <property type="evidence" value="ECO:0007669"/>
    <property type="project" value="TreeGrafter"/>
</dbReference>
<dbReference type="GO" id="GO:0015935">
    <property type="term" value="C:small ribosomal subunit"/>
    <property type="evidence" value="ECO:0007669"/>
    <property type="project" value="TreeGrafter"/>
</dbReference>
<dbReference type="GO" id="GO:0019843">
    <property type="term" value="F:rRNA binding"/>
    <property type="evidence" value="ECO:0007669"/>
    <property type="project" value="UniProtKB-UniRule"/>
</dbReference>
<dbReference type="GO" id="GO:0003735">
    <property type="term" value="F:structural constituent of ribosome"/>
    <property type="evidence" value="ECO:0007669"/>
    <property type="project" value="InterPro"/>
</dbReference>
<dbReference type="GO" id="GO:0000049">
    <property type="term" value="F:tRNA binding"/>
    <property type="evidence" value="ECO:0007669"/>
    <property type="project" value="UniProtKB-UniRule"/>
</dbReference>
<dbReference type="GO" id="GO:0006412">
    <property type="term" value="P:translation"/>
    <property type="evidence" value="ECO:0007669"/>
    <property type="project" value="UniProtKB-UniRule"/>
</dbReference>
<dbReference type="FunFam" id="1.10.8.50:FF:000001">
    <property type="entry name" value="30S ribosomal protein S13"/>
    <property type="match status" value="1"/>
</dbReference>
<dbReference type="FunFam" id="4.10.910.10:FF:000001">
    <property type="entry name" value="30S ribosomal protein S13"/>
    <property type="match status" value="1"/>
</dbReference>
<dbReference type="Gene3D" id="1.10.8.50">
    <property type="match status" value="1"/>
</dbReference>
<dbReference type="Gene3D" id="4.10.910.10">
    <property type="entry name" value="30s ribosomal protein s13, domain 2"/>
    <property type="match status" value="1"/>
</dbReference>
<dbReference type="HAMAP" id="MF_01315">
    <property type="entry name" value="Ribosomal_uS13"/>
    <property type="match status" value="1"/>
</dbReference>
<dbReference type="InterPro" id="IPR027437">
    <property type="entry name" value="Rbsml_uS13_C"/>
</dbReference>
<dbReference type="InterPro" id="IPR001892">
    <property type="entry name" value="Ribosomal_uS13"/>
</dbReference>
<dbReference type="InterPro" id="IPR010979">
    <property type="entry name" value="Ribosomal_uS13-like_H2TH"/>
</dbReference>
<dbReference type="InterPro" id="IPR019980">
    <property type="entry name" value="Ribosomal_uS13_bac-type"/>
</dbReference>
<dbReference type="InterPro" id="IPR018269">
    <property type="entry name" value="Ribosomal_uS13_CS"/>
</dbReference>
<dbReference type="NCBIfam" id="TIGR03631">
    <property type="entry name" value="uS13_bact"/>
    <property type="match status" value="1"/>
</dbReference>
<dbReference type="PANTHER" id="PTHR10871">
    <property type="entry name" value="30S RIBOSOMAL PROTEIN S13/40S RIBOSOMAL PROTEIN S18"/>
    <property type="match status" value="1"/>
</dbReference>
<dbReference type="PANTHER" id="PTHR10871:SF1">
    <property type="entry name" value="SMALL RIBOSOMAL SUBUNIT PROTEIN US13M"/>
    <property type="match status" value="1"/>
</dbReference>
<dbReference type="Pfam" id="PF00416">
    <property type="entry name" value="Ribosomal_S13"/>
    <property type="match status" value="1"/>
</dbReference>
<dbReference type="PIRSF" id="PIRSF002134">
    <property type="entry name" value="Ribosomal_S13"/>
    <property type="match status" value="1"/>
</dbReference>
<dbReference type="SUPFAM" id="SSF46946">
    <property type="entry name" value="S13-like H2TH domain"/>
    <property type="match status" value="1"/>
</dbReference>
<dbReference type="PROSITE" id="PS00646">
    <property type="entry name" value="RIBOSOMAL_S13_1"/>
    <property type="match status" value="1"/>
</dbReference>
<dbReference type="PROSITE" id="PS50159">
    <property type="entry name" value="RIBOSOMAL_S13_2"/>
    <property type="match status" value="1"/>
</dbReference>
<gene>
    <name evidence="1" type="primary">rpsM</name>
    <name type="ordered locus">Haur_4937</name>
</gene>
<organism>
    <name type="scientific">Herpetosiphon aurantiacus (strain ATCC 23779 / DSM 785 / 114-95)</name>
    <dbReference type="NCBI Taxonomy" id="316274"/>
    <lineage>
        <taxon>Bacteria</taxon>
        <taxon>Bacillati</taxon>
        <taxon>Chloroflexota</taxon>
        <taxon>Chloroflexia</taxon>
        <taxon>Herpetosiphonales</taxon>
        <taxon>Herpetosiphonaceae</taxon>
        <taxon>Herpetosiphon</taxon>
    </lineage>
</organism>
<comment type="function">
    <text evidence="1">Located at the top of the head of the 30S subunit, it contacts several helices of the 16S rRNA. In the 70S ribosome it contacts the 23S rRNA (bridge B1a) and protein L5 of the 50S subunit (bridge B1b), connecting the 2 subunits; these bridges are implicated in subunit movement. Contacts the tRNAs in the A and P-sites.</text>
</comment>
<comment type="subunit">
    <text evidence="1">Part of the 30S ribosomal subunit. Forms a loose heterodimer with protein S19. Forms two bridges to the 50S subunit in the 70S ribosome.</text>
</comment>
<comment type="similarity">
    <text evidence="1">Belongs to the universal ribosomal protein uS13 family.</text>
</comment>
<protein>
    <recommendedName>
        <fullName evidence="1">Small ribosomal subunit protein uS13</fullName>
    </recommendedName>
    <alternativeName>
        <fullName evidence="3">30S ribosomal protein S13</fullName>
    </alternativeName>
</protein>
<evidence type="ECO:0000255" key="1">
    <source>
        <dbReference type="HAMAP-Rule" id="MF_01315"/>
    </source>
</evidence>
<evidence type="ECO:0000256" key="2">
    <source>
        <dbReference type="SAM" id="MobiDB-lite"/>
    </source>
</evidence>
<evidence type="ECO:0000305" key="3"/>
<sequence length="127" mass="14472">MARISGVDIPRNKRVEISLTYIYGIGRTTSTEILARTNINPNVRVKDLTEDEVIRLREIIDQDYTVEGDLRRAVQLNIKRLMDIGCYRGIRHRKGLPLRGQRTKTNARTRRGKKGAAIGGKKKATKK</sequence>